<proteinExistence type="inferred from homology"/>
<gene>
    <name evidence="1" type="primary">tusA</name>
    <name type="ordered locus">VFMJ11_0019</name>
</gene>
<feature type="chain" id="PRO_1000199936" description="Sulfur carrier protein TusA">
    <location>
        <begin position="1"/>
        <end position="83"/>
    </location>
</feature>
<feature type="active site" description="Cysteine persulfide intermediate" evidence="1">
    <location>
        <position position="19"/>
    </location>
</feature>
<reference key="1">
    <citation type="submission" date="2008-08" db="EMBL/GenBank/DDBJ databases">
        <title>Complete sequence of Vibrio fischeri strain MJ11.</title>
        <authorList>
            <person name="Mandel M.J."/>
            <person name="Stabb E.V."/>
            <person name="Ruby E.G."/>
            <person name="Ferriera S."/>
            <person name="Johnson J."/>
            <person name="Kravitz S."/>
            <person name="Beeson K."/>
            <person name="Sutton G."/>
            <person name="Rogers Y.-H."/>
            <person name="Friedman R."/>
            <person name="Frazier M."/>
            <person name="Venter J.C."/>
        </authorList>
    </citation>
    <scope>NUCLEOTIDE SEQUENCE [LARGE SCALE GENOMIC DNA]</scope>
    <source>
        <strain>MJ11</strain>
    </source>
</reference>
<name>TUSA_ALIFM</name>
<accession>B5FEW3</accession>
<sequence>MTINFDTATQTLEAEGLRCPEPVMMVRKTIRKMEDGETLLIKADDPSTTRDIPSFCRFMDHELIAEDTDSLPYRYLIRKGLSK</sequence>
<dbReference type="EMBL" id="CP001139">
    <property type="protein sequence ID" value="ACH65111.1"/>
    <property type="molecule type" value="Genomic_DNA"/>
</dbReference>
<dbReference type="RefSeq" id="WP_005416800.1">
    <property type="nucleotide sequence ID" value="NC_011184.1"/>
</dbReference>
<dbReference type="SMR" id="B5FEW3"/>
<dbReference type="GeneID" id="54162648"/>
<dbReference type="KEGG" id="vfm:VFMJ11_0019"/>
<dbReference type="HOGENOM" id="CLU_165255_5_0_6"/>
<dbReference type="Proteomes" id="UP000001857">
    <property type="component" value="Chromosome I"/>
</dbReference>
<dbReference type="GO" id="GO:0005737">
    <property type="term" value="C:cytoplasm"/>
    <property type="evidence" value="ECO:0007669"/>
    <property type="project" value="UniProtKB-SubCell"/>
</dbReference>
<dbReference type="GO" id="GO:0097163">
    <property type="term" value="F:sulfur carrier activity"/>
    <property type="evidence" value="ECO:0007669"/>
    <property type="project" value="UniProtKB-UniRule"/>
</dbReference>
<dbReference type="GO" id="GO:0002143">
    <property type="term" value="P:tRNA wobble position uridine thiolation"/>
    <property type="evidence" value="ECO:0007669"/>
    <property type="project" value="InterPro"/>
</dbReference>
<dbReference type="CDD" id="cd03423">
    <property type="entry name" value="SirA"/>
    <property type="match status" value="1"/>
</dbReference>
<dbReference type="Gene3D" id="3.30.110.40">
    <property type="entry name" value="TusA-like domain"/>
    <property type="match status" value="1"/>
</dbReference>
<dbReference type="HAMAP" id="MF_00413">
    <property type="entry name" value="Thiourid_synth_A"/>
    <property type="match status" value="1"/>
</dbReference>
<dbReference type="InterPro" id="IPR022931">
    <property type="entry name" value="Sulphur_carrier_TusA"/>
</dbReference>
<dbReference type="InterPro" id="IPR001455">
    <property type="entry name" value="TusA-like"/>
</dbReference>
<dbReference type="InterPro" id="IPR036868">
    <property type="entry name" value="TusA-like_sf"/>
</dbReference>
<dbReference type="NCBIfam" id="NF001423">
    <property type="entry name" value="PRK00299.1"/>
    <property type="match status" value="1"/>
</dbReference>
<dbReference type="PANTHER" id="PTHR33279:SF2">
    <property type="entry name" value="SULFUR CARRIER PROTEIN TUSA"/>
    <property type="match status" value="1"/>
</dbReference>
<dbReference type="PANTHER" id="PTHR33279">
    <property type="entry name" value="SULFUR CARRIER PROTEIN YEDF-RELATED"/>
    <property type="match status" value="1"/>
</dbReference>
<dbReference type="Pfam" id="PF01206">
    <property type="entry name" value="TusA"/>
    <property type="match status" value="1"/>
</dbReference>
<dbReference type="SUPFAM" id="SSF64307">
    <property type="entry name" value="SirA-like"/>
    <property type="match status" value="1"/>
</dbReference>
<dbReference type="PROSITE" id="PS01148">
    <property type="entry name" value="UPF0033"/>
    <property type="match status" value="1"/>
</dbReference>
<comment type="function">
    <text evidence="1">Sulfur carrier protein which probably makes part of a sulfur-relay system.</text>
</comment>
<comment type="subcellular location">
    <subcellularLocation>
        <location evidence="1">Cytoplasm</location>
    </subcellularLocation>
</comment>
<comment type="similarity">
    <text evidence="1">Belongs to the sulfur carrier protein TusA family.</text>
</comment>
<protein>
    <recommendedName>
        <fullName evidence="1">Sulfur carrier protein TusA</fullName>
    </recommendedName>
</protein>
<evidence type="ECO:0000255" key="1">
    <source>
        <dbReference type="HAMAP-Rule" id="MF_00413"/>
    </source>
</evidence>
<keyword id="KW-0963">Cytoplasm</keyword>
<organism>
    <name type="scientific">Aliivibrio fischeri (strain MJ11)</name>
    <name type="common">Vibrio fischeri</name>
    <dbReference type="NCBI Taxonomy" id="388396"/>
    <lineage>
        <taxon>Bacteria</taxon>
        <taxon>Pseudomonadati</taxon>
        <taxon>Pseudomonadota</taxon>
        <taxon>Gammaproteobacteria</taxon>
        <taxon>Vibrionales</taxon>
        <taxon>Vibrionaceae</taxon>
        <taxon>Aliivibrio</taxon>
    </lineage>
</organism>